<dbReference type="EMBL" id="AE017220">
    <property type="protein sequence ID" value="AAX66210.1"/>
    <property type="molecule type" value="Genomic_DNA"/>
</dbReference>
<dbReference type="RefSeq" id="WP_000538694.1">
    <property type="nucleotide sequence ID" value="NC_006905.1"/>
</dbReference>
<dbReference type="KEGG" id="sec:SCH_2304"/>
<dbReference type="HOGENOM" id="CLU_131462_1_0_6"/>
<dbReference type="UniPathway" id="UPA00030"/>
<dbReference type="Proteomes" id="UP000000538">
    <property type="component" value="Chromosome"/>
</dbReference>
<dbReference type="GO" id="GO:0005886">
    <property type="term" value="C:plasma membrane"/>
    <property type="evidence" value="ECO:0007669"/>
    <property type="project" value="UniProtKB-SubCell"/>
</dbReference>
<dbReference type="GO" id="GO:1901505">
    <property type="term" value="F:carbohydrate derivative transmembrane transporter activity"/>
    <property type="evidence" value="ECO:0007669"/>
    <property type="project" value="InterPro"/>
</dbReference>
<dbReference type="GO" id="GO:0009245">
    <property type="term" value="P:lipid A biosynthetic process"/>
    <property type="evidence" value="ECO:0007669"/>
    <property type="project" value="UniProtKB-UniRule"/>
</dbReference>
<dbReference type="GO" id="GO:0009103">
    <property type="term" value="P:lipopolysaccharide biosynthetic process"/>
    <property type="evidence" value="ECO:0007669"/>
    <property type="project" value="UniProtKB-UniRule"/>
</dbReference>
<dbReference type="Gene3D" id="1.10.3730.20">
    <property type="match status" value="1"/>
</dbReference>
<dbReference type="HAMAP" id="MF_00538">
    <property type="entry name" value="Flippase_ArnF"/>
    <property type="match status" value="1"/>
</dbReference>
<dbReference type="InterPro" id="IPR022832">
    <property type="entry name" value="Flippase_ArnF"/>
</dbReference>
<dbReference type="InterPro" id="IPR000390">
    <property type="entry name" value="Small_drug/metabolite_transptr"/>
</dbReference>
<dbReference type="NCBIfam" id="NF002816">
    <property type="entry name" value="PRK02971.1-2"/>
    <property type="match status" value="1"/>
</dbReference>
<dbReference type="PANTHER" id="PTHR30561:SF9">
    <property type="entry name" value="4-AMINO-4-DEOXY-L-ARABINOSE-PHOSPHOUNDECAPRENOL FLIPPASE SUBUNIT ARNF-RELATED"/>
    <property type="match status" value="1"/>
</dbReference>
<dbReference type="PANTHER" id="PTHR30561">
    <property type="entry name" value="SMR FAMILY PROTON-DEPENDENT DRUG EFFLUX TRANSPORTER SUGE"/>
    <property type="match status" value="1"/>
</dbReference>
<organism>
    <name type="scientific">Salmonella choleraesuis (strain SC-B67)</name>
    <dbReference type="NCBI Taxonomy" id="321314"/>
    <lineage>
        <taxon>Bacteria</taxon>
        <taxon>Pseudomonadati</taxon>
        <taxon>Pseudomonadota</taxon>
        <taxon>Gammaproteobacteria</taxon>
        <taxon>Enterobacterales</taxon>
        <taxon>Enterobacteriaceae</taxon>
        <taxon>Salmonella</taxon>
    </lineage>
</organism>
<protein>
    <recommendedName>
        <fullName evidence="1">Probable 4-amino-4-deoxy-L-arabinose-phosphoundecaprenol flippase subunit ArnF</fullName>
        <shortName evidence="1">L-Ara4N-phosphoundecaprenol flippase subunit ArnF</shortName>
    </recommendedName>
    <alternativeName>
        <fullName evidence="1">Undecaprenyl phosphate-aminoarabinose flippase subunit ArnF</fullName>
    </alternativeName>
</protein>
<gene>
    <name evidence="1" type="primary">arnF</name>
    <name type="ordered locus">SCH_2304</name>
</gene>
<keyword id="KW-0997">Cell inner membrane</keyword>
<keyword id="KW-1003">Cell membrane</keyword>
<keyword id="KW-0441">Lipid A biosynthesis</keyword>
<keyword id="KW-0444">Lipid biosynthesis</keyword>
<keyword id="KW-0443">Lipid metabolism</keyword>
<keyword id="KW-0448">Lipopolysaccharide biosynthesis</keyword>
<keyword id="KW-0472">Membrane</keyword>
<keyword id="KW-0812">Transmembrane</keyword>
<keyword id="KW-1133">Transmembrane helix</keyword>
<keyword id="KW-0813">Transport</keyword>
<feature type="chain" id="PRO_1000017385" description="Probable 4-amino-4-deoxy-L-arabinose-phosphoundecaprenol flippase subunit ArnF">
    <location>
        <begin position="1"/>
        <end position="125"/>
    </location>
</feature>
<feature type="topological domain" description="Cytoplasmic" evidence="1">
    <location>
        <begin position="1"/>
        <end position="2"/>
    </location>
</feature>
<feature type="transmembrane region" description="Helical" evidence="1">
    <location>
        <begin position="3"/>
        <end position="23"/>
    </location>
</feature>
<feature type="topological domain" description="Periplasmic" evidence="1">
    <location>
        <begin position="24"/>
        <end position="33"/>
    </location>
</feature>
<feature type="transmembrane region" description="Helical" evidence="1">
    <location>
        <begin position="34"/>
        <end position="54"/>
    </location>
</feature>
<feature type="topological domain" description="Cytoplasmic" evidence="1">
    <location>
        <begin position="55"/>
        <end position="76"/>
    </location>
</feature>
<feature type="transmembrane region" description="Helical" evidence="1">
    <location>
        <begin position="77"/>
        <end position="97"/>
    </location>
</feature>
<feature type="topological domain" description="Periplasmic" evidence="1">
    <location>
        <begin position="98"/>
        <end position="100"/>
    </location>
</feature>
<feature type="transmembrane region" description="Helical" evidence="1">
    <location>
        <begin position="101"/>
        <end position="121"/>
    </location>
</feature>
<feature type="topological domain" description="Cytoplasmic" evidence="1">
    <location>
        <begin position="122"/>
        <end position="125"/>
    </location>
</feature>
<sequence>MGVMWGLISVAIASLAQLSLGFAMMRLPSIAHPLAFISGLGAFNAATLALFAGLAGYLVSVFCWQKTLHTLALSKAYALLSLSYVLVWVASMLLPGLQGAFSLKAMLGVLCIMAGVMLIFLPARS</sequence>
<name>ARNF_SALCH</name>
<comment type="function">
    <text evidence="1">Translocates 4-amino-4-deoxy-L-arabinose-phosphoundecaprenol (alpha-L-Ara4N-phosphoundecaprenol) from the cytoplasmic to the periplasmic side of the inner membrane.</text>
</comment>
<comment type="pathway">
    <text evidence="1">Bacterial outer membrane biogenesis; lipopolysaccharide biosynthesis.</text>
</comment>
<comment type="subunit">
    <text evidence="1">Heterodimer of ArnE and ArnF.</text>
</comment>
<comment type="subcellular location">
    <subcellularLocation>
        <location evidence="1">Cell inner membrane</location>
        <topology evidence="1">Multi-pass membrane protein</topology>
    </subcellularLocation>
</comment>
<comment type="similarity">
    <text evidence="1">Belongs to the ArnF family.</text>
</comment>
<accession>Q57M52</accession>
<evidence type="ECO:0000255" key="1">
    <source>
        <dbReference type="HAMAP-Rule" id="MF_00538"/>
    </source>
</evidence>
<proteinExistence type="inferred from homology"/>
<reference key="1">
    <citation type="journal article" date="2005" name="Nucleic Acids Res.">
        <title>The genome sequence of Salmonella enterica serovar Choleraesuis, a highly invasive and resistant zoonotic pathogen.</title>
        <authorList>
            <person name="Chiu C.-H."/>
            <person name="Tang P."/>
            <person name="Chu C."/>
            <person name="Hu S."/>
            <person name="Bao Q."/>
            <person name="Yu J."/>
            <person name="Chou Y.-Y."/>
            <person name="Wang H.-S."/>
            <person name="Lee Y.-S."/>
        </authorList>
    </citation>
    <scope>NUCLEOTIDE SEQUENCE [LARGE SCALE GENOMIC DNA]</scope>
    <source>
        <strain>SC-B67</strain>
    </source>
</reference>